<reference key="1">
    <citation type="journal article" date="2009" name="Science">
        <title>The genome sequence of taurine cattle: a window to ruminant biology and evolution.</title>
        <authorList>
            <consortium name="The bovine genome sequencing and analysis consortium"/>
        </authorList>
    </citation>
    <scope>NUCLEOTIDE SEQUENCE [LARGE SCALE GENOMIC DNA]</scope>
    <source>
        <strain>Hereford</strain>
    </source>
</reference>
<organism>
    <name type="scientific">Bos taurus</name>
    <name type="common">Bovine</name>
    <dbReference type="NCBI Taxonomy" id="9913"/>
    <lineage>
        <taxon>Eukaryota</taxon>
        <taxon>Metazoa</taxon>
        <taxon>Chordata</taxon>
        <taxon>Craniata</taxon>
        <taxon>Vertebrata</taxon>
        <taxon>Euteleostomi</taxon>
        <taxon>Mammalia</taxon>
        <taxon>Eutheria</taxon>
        <taxon>Laurasiatheria</taxon>
        <taxon>Artiodactyla</taxon>
        <taxon>Ruminantia</taxon>
        <taxon>Pecora</taxon>
        <taxon>Bovidae</taxon>
        <taxon>Bovinae</taxon>
        <taxon>Bos</taxon>
    </lineage>
</organism>
<proteinExistence type="inferred from homology"/>
<keyword id="KW-0472">Membrane</keyword>
<keyword id="KW-0496">Mitochondrion</keyword>
<keyword id="KW-0999">Mitochondrion inner membrane</keyword>
<keyword id="KW-1185">Reference proteome</keyword>
<keyword id="KW-0809">Transit peptide</keyword>
<keyword id="KW-0812">Transmembrane</keyword>
<keyword id="KW-1133">Transmembrane helix</keyword>
<name>PT100_BOVIN</name>
<evidence type="ECO:0000250" key="1"/>
<evidence type="ECO:0000250" key="2">
    <source>
        <dbReference type="UniProtKB" id="P0DJ07"/>
    </source>
</evidence>
<evidence type="ECO:0000250" key="3">
    <source>
        <dbReference type="UniProtKB" id="P0DJE0"/>
    </source>
</evidence>
<evidence type="ECO:0000255" key="4"/>
<evidence type="ECO:0000305" key="5"/>
<accession>E1BHC3</accession>
<gene>
    <name type="primary">PET100</name>
</gene>
<comment type="function">
    <text evidence="2">Plays a role in mitochondrial complex IV assembly.</text>
</comment>
<comment type="subunit">
    <text evidence="1">Interacts with COX7A2.</text>
</comment>
<comment type="subcellular location">
    <subcellularLocation>
        <location evidence="5">Membrane</location>
        <topology evidence="5">Single-pass membrane protein</topology>
    </subcellularLocation>
    <subcellularLocation>
        <location evidence="3">Mitochondrion</location>
    </subcellularLocation>
    <subcellularLocation>
        <location evidence="2">Mitochondrion inner membrane</location>
    </subcellularLocation>
</comment>
<comment type="similarity">
    <text evidence="5">Belongs to the PET100 family.</text>
</comment>
<dbReference type="EMBL" id="AAFC03033351">
    <property type="status" value="NOT_ANNOTATED_CDS"/>
    <property type="molecule type" value="Genomic_DNA"/>
</dbReference>
<dbReference type="RefSeq" id="XP_002688903.1">
    <property type="nucleotide sequence ID" value="XM_002688857.4"/>
</dbReference>
<dbReference type="RefSeq" id="XP_874611.1">
    <property type="nucleotide sequence ID" value="XM_869518.5"/>
</dbReference>
<dbReference type="FunCoup" id="E1BHC3">
    <property type="interactions" value="208"/>
</dbReference>
<dbReference type="STRING" id="9913.ENSBTAP00000062202"/>
<dbReference type="Ensembl" id="ENSBTAT00000106689.1">
    <property type="protein sequence ID" value="ENSBTAP00000098691.1"/>
    <property type="gene ID" value="ENSBTAG00000048824.2"/>
</dbReference>
<dbReference type="GeneID" id="616224"/>
<dbReference type="KEGG" id="bta:616224"/>
<dbReference type="CTD" id="100131801"/>
<dbReference type="VGNC" id="VGNC:112612">
    <property type="gene designation" value="PET100"/>
</dbReference>
<dbReference type="GeneTree" id="ENSGT00390000016884"/>
<dbReference type="InParanoid" id="E1BHC3"/>
<dbReference type="OrthoDB" id="18175at2759"/>
<dbReference type="Proteomes" id="UP000009136">
    <property type="component" value="Chromosome 7"/>
</dbReference>
<dbReference type="GO" id="GO:0005743">
    <property type="term" value="C:mitochondrial inner membrane"/>
    <property type="evidence" value="ECO:0000318"/>
    <property type="project" value="GO_Central"/>
</dbReference>
<dbReference type="GO" id="GO:0051082">
    <property type="term" value="F:unfolded protein binding"/>
    <property type="evidence" value="ECO:0000318"/>
    <property type="project" value="GO_Central"/>
</dbReference>
<dbReference type="GO" id="GO:0033617">
    <property type="term" value="P:mitochondrial cytochrome c oxidase assembly"/>
    <property type="evidence" value="ECO:0000318"/>
    <property type="project" value="GO_Central"/>
</dbReference>
<dbReference type="InterPro" id="IPR018625">
    <property type="entry name" value="Pet100"/>
</dbReference>
<dbReference type="PANTHER" id="PTHR33968">
    <property type="entry name" value="PROTEIN PET100 HOMOLOG, MITOCHONDRIAL"/>
    <property type="match status" value="1"/>
</dbReference>
<dbReference type="PANTHER" id="PTHR33968:SF1">
    <property type="entry name" value="PROTEIN PET100 HOMOLOG, MITOCHONDRIAL"/>
    <property type="match status" value="1"/>
</dbReference>
<dbReference type="Pfam" id="PF09803">
    <property type="entry name" value="Pet100"/>
    <property type="match status" value="1"/>
</dbReference>
<sequence>MGVKLEVFRMTIYLTFPVAMFWIANQAEWFEDYVIQRKRELWPPEKEDQRRELEEFKERIRKQREEKLLRAAQQGP</sequence>
<feature type="transit peptide" description="Mitochondrion">
    <location>
        <begin position="1"/>
        <end status="unknown"/>
    </location>
</feature>
<feature type="chain" id="PRO_0000413098" description="Protein PET100 homolog, mitochondrial">
    <location>
        <begin status="unknown"/>
        <end position="76"/>
    </location>
</feature>
<feature type="transmembrane region" description="Helical" evidence="4">
    <location>
        <begin position="7"/>
        <end position="24"/>
    </location>
</feature>
<protein>
    <recommendedName>
        <fullName>Protein PET100 homolog, mitochondrial</fullName>
    </recommendedName>
</protein>